<name>AATA_THEPD</name>
<organism>
    <name type="scientific">Thermofilum pendens (strain DSM 2475 / Hrk 5)</name>
    <dbReference type="NCBI Taxonomy" id="368408"/>
    <lineage>
        <taxon>Archaea</taxon>
        <taxon>Thermoproteota</taxon>
        <taxon>Thermoprotei</taxon>
        <taxon>Thermofilales</taxon>
        <taxon>Thermofilaceae</taxon>
        <taxon>Thermofilum</taxon>
    </lineage>
</organism>
<protein>
    <recommendedName>
        <fullName evidence="1">A-type ATP synthase subunit A</fullName>
        <ecNumber evidence="1">7.1.2.2</ecNumber>
    </recommendedName>
</protein>
<comment type="function">
    <text evidence="1">Component of the A-type ATP synthase that produces ATP from ADP in the presence of a proton gradient across the membrane. The A chain is the catalytic subunit.</text>
</comment>
<comment type="catalytic activity">
    <reaction evidence="1">
        <text>ATP + H2O + 4 H(+)(in) = ADP + phosphate + 5 H(+)(out)</text>
        <dbReference type="Rhea" id="RHEA:57720"/>
        <dbReference type="ChEBI" id="CHEBI:15377"/>
        <dbReference type="ChEBI" id="CHEBI:15378"/>
        <dbReference type="ChEBI" id="CHEBI:30616"/>
        <dbReference type="ChEBI" id="CHEBI:43474"/>
        <dbReference type="ChEBI" id="CHEBI:456216"/>
        <dbReference type="EC" id="7.1.2.2"/>
    </reaction>
</comment>
<comment type="subunit">
    <text evidence="1">Has multiple subunits with at least A(3), B(3), C, D, E, F, H, I and proteolipid K(x).</text>
</comment>
<comment type="subcellular location">
    <subcellularLocation>
        <location evidence="1">Cell membrane</location>
        <topology evidence="1">Peripheral membrane protein</topology>
    </subcellularLocation>
</comment>
<comment type="similarity">
    <text evidence="1">Belongs to the ATPase alpha/beta chains family.</text>
</comment>
<gene>
    <name evidence="1" type="primary">atpA</name>
    <name type="ordered locus">Tpen_0342</name>
</gene>
<keyword id="KW-0066">ATP synthesis</keyword>
<keyword id="KW-0067">ATP-binding</keyword>
<keyword id="KW-1003">Cell membrane</keyword>
<keyword id="KW-0375">Hydrogen ion transport</keyword>
<keyword id="KW-0406">Ion transport</keyword>
<keyword id="KW-0472">Membrane</keyword>
<keyword id="KW-0547">Nucleotide-binding</keyword>
<keyword id="KW-1185">Reference proteome</keyword>
<keyword id="KW-1278">Translocase</keyword>
<keyword id="KW-0813">Transport</keyword>
<proteinExistence type="inferred from homology"/>
<feature type="chain" id="PRO_0000322485" description="A-type ATP synthase subunit A">
    <location>
        <begin position="1"/>
        <end position="601"/>
    </location>
</feature>
<feature type="binding site" evidence="1">
    <location>
        <begin position="235"/>
        <end position="242"/>
    </location>
    <ligand>
        <name>ATP</name>
        <dbReference type="ChEBI" id="CHEBI:30616"/>
    </ligand>
</feature>
<evidence type="ECO:0000255" key="1">
    <source>
        <dbReference type="HAMAP-Rule" id="MF_00309"/>
    </source>
</evidence>
<dbReference type="EC" id="7.1.2.2" evidence="1"/>
<dbReference type="EMBL" id="CP000505">
    <property type="protein sequence ID" value="ABL77751.1"/>
    <property type="molecule type" value="Genomic_DNA"/>
</dbReference>
<dbReference type="RefSeq" id="WP_011752016.1">
    <property type="nucleotide sequence ID" value="NC_008698.1"/>
</dbReference>
<dbReference type="SMR" id="A1RX21"/>
<dbReference type="STRING" id="368408.Tpen_0342"/>
<dbReference type="EnsemblBacteria" id="ABL77751">
    <property type="protein sequence ID" value="ABL77751"/>
    <property type="gene ID" value="Tpen_0342"/>
</dbReference>
<dbReference type="GeneID" id="4601452"/>
<dbReference type="KEGG" id="tpe:Tpen_0342"/>
<dbReference type="eggNOG" id="arCOG00868">
    <property type="taxonomic scope" value="Archaea"/>
</dbReference>
<dbReference type="HOGENOM" id="CLU_008162_3_1_2"/>
<dbReference type="OrthoDB" id="115235at2157"/>
<dbReference type="Proteomes" id="UP000000641">
    <property type="component" value="Chromosome"/>
</dbReference>
<dbReference type="GO" id="GO:0005886">
    <property type="term" value="C:plasma membrane"/>
    <property type="evidence" value="ECO:0007669"/>
    <property type="project" value="UniProtKB-SubCell"/>
</dbReference>
<dbReference type="GO" id="GO:0005524">
    <property type="term" value="F:ATP binding"/>
    <property type="evidence" value="ECO:0007669"/>
    <property type="project" value="UniProtKB-UniRule"/>
</dbReference>
<dbReference type="GO" id="GO:0046933">
    <property type="term" value="F:proton-transporting ATP synthase activity, rotational mechanism"/>
    <property type="evidence" value="ECO:0007669"/>
    <property type="project" value="UniProtKB-UniRule"/>
</dbReference>
<dbReference type="GO" id="GO:0046961">
    <property type="term" value="F:proton-transporting ATPase activity, rotational mechanism"/>
    <property type="evidence" value="ECO:0007669"/>
    <property type="project" value="InterPro"/>
</dbReference>
<dbReference type="GO" id="GO:0042777">
    <property type="term" value="P:proton motive force-driven plasma membrane ATP synthesis"/>
    <property type="evidence" value="ECO:0007669"/>
    <property type="project" value="UniProtKB-UniRule"/>
</dbReference>
<dbReference type="CDD" id="cd18111">
    <property type="entry name" value="ATP-synt_V_A-type_alpha_C"/>
    <property type="match status" value="1"/>
</dbReference>
<dbReference type="CDD" id="cd01134">
    <property type="entry name" value="V_A-ATPase_A"/>
    <property type="match status" value="1"/>
</dbReference>
<dbReference type="FunFam" id="2.40.50.100:FF:000008">
    <property type="entry name" value="V-type proton ATPase catalytic subunit A"/>
    <property type="match status" value="1"/>
</dbReference>
<dbReference type="Gene3D" id="2.40.30.20">
    <property type="match status" value="1"/>
</dbReference>
<dbReference type="Gene3D" id="2.40.50.100">
    <property type="match status" value="1"/>
</dbReference>
<dbReference type="Gene3D" id="1.10.1140.10">
    <property type="entry name" value="Bovine Mitochondrial F1-atpase, Atp Synthase Beta Chain, Chain D, domain 3"/>
    <property type="match status" value="1"/>
</dbReference>
<dbReference type="Gene3D" id="3.40.50.300">
    <property type="entry name" value="P-loop containing nucleotide triphosphate hydrolases"/>
    <property type="match status" value="1"/>
</dbReference>
<dbReference type="HAMAP" id="MF_00309">
    <property type="entry name" value="ATP_synth_A_arch"/>
    <property type="match status" value="1"/>
</dbReference>
<dbReference type="InterPro" id="IPR055190">
    <property type="entry name" value="ATP-synt_VA_C"/>
</dbReference>
<dbReference type="InterPro" id="IPR031686">
    <property type="entry name" value="ATP-synth_a_Xtn"/>
</dbReference>
<dbReference type="InterPro" id="IPR023366">
    <property type="entry name" value="ATP_synth_asu-like_sf"/>
</dbReference>
<dbReference type="InterPro" id="IPR020003">
    <property type="entry name" value="ATPase_a/bsu_AS"/>
</dbReference>
<dbReference type="InterPro" id="IPR004100">
    <property type="entry name" value="ATPase_F1/V1/A1_a/bsu_N"/>
</dbReference>
<dbReference type="InterPro" id="IPR036121">
    <property type="entry name" value="ATPase_F1/V1/A1_a/bsu_N_sf"/>
</dbReference>
<dbReference type="InterPro" id="IPR000194">
    <property type="entry name" value="ATPase_F1/V1/A1_a/bsu_nucl-bd"/>
</dbReference>
<dbReference type="InterPro" id="IPR024034">
    <property type="entry name" value="ATPase_F1/V1_b/a_C"/>
</dbReference>
<dbReference type="InterPro" id="IPR027417">
    <property type="entry name" value="P-loop_NTPase"/>
</dbReference>
<dbReference type="InterPro" id="IPR022878">
    <property type="entry name" value="V-ATPase_asu"/>
</dbReference>
<dbReference type="NCBIfam" id="NF003220">
    <property type="entry name" value="PRK04192.1"/>
    <property type="match status" value="1"/>
</dbReference>
<dbReference type="PANTHER" id="PTHR43607:SF1">
    <property type="entry name" value="H(+)-TRANSPORTING TWO-SECTOR ATPASE"/>
    <property type="match status" value="1"/>
</dbReference>
<dbReference type="PANTHER" id="PTHR43607">
    <property type="entry name" value="V-TYPE PROTON ATPASE CATALYTIC SUBUNIT A"/>
    <property type="match status" value="1"/>
</dbReference>
<dbReference type="Pfam" id="PF00006">
    <property type="entry name" value="ATP-synt_ab"/>
    <property type="match status" value="1"/>
</dbReference>
<dbReference type="Pfam" id="PF02874">
    <property type="entry name" value="ATP-synt_ab_N"/>
    <property type="match status" value="1"/>
</dbReference>
<dbReference type="Pfam" id="PF16886">
    <property type="entry name" value="ATP-synt_ab_Xtn"/>
    <property type="match status" value="1"/>
</dbReference>
<dbReference type="Pfam" id="PF22919">
    <property type="entry name" value="ATP-synt_VA_C"/>
    <property type="match status" value="1"/>
</dbReference>
<dbReference type="SUPFAM" id="SSF47917">
    <property type="entry name" value="C-terminal domain of alpha and beta subunits of F1 ATP synthase"/>
    <property type="match status" value="1"/>
</dbReference>
<dbReference type="SUPFAM" id="SSF50615">
    <property type="entry name" value="N-terminal domain of alpha and beta subunits of F1 ATP synthase"/>
    <property type="match status" value="1"/>
</dbReference>
<dbReference type="SUPFAM" id="SSF52540">
    <property type="entry name" value="P-loop containing nucleoside triphosphate hydrolases"/>
    <property type="match status" value="1"/>
</dbReference>
<dbReference type="PROSITE" id="PS00152">
    <property type="entry name" value="ATPASE_ALPHA_BETA"/>
    <property type="match status" value="1"/>
</dbReference>
<reference key="1">
    <citation type="journal article" date="2008" name="J. Bacteriol.">
        <title>Genome sequence of Thermofilum pendens reveals an exceptional loss of biosynthetic pathways without genome reduction.</title>
        <authorList>
            <person name="Anderson I."/>
            <person name="Rodriguez J."/>
            <person name="Susanti D."/>
            <person name="Porat I."/>
            <person name="Reich C."/>
            <person name="Ulrich L.E."/>
            <person name="Elkins J.G."/>
            <person name="Mavromatis K."/>
            <person name="Lykidis A."/>
            <person name="Kim E."/>
            <person name="Thompson L.S."/>
            <person name="Nolan M."/>
            <person name="Land M."/>
            <person name="Copeland A."/>
            <person name="Lapidus A."/>
            <person name="Lucas S."/>
            <person name="Detter C."/>
            <person name="Zhulin I.B."/>
            <person name="Olsen G.J."/>
            <person name="Whitman W."/>
            <person name="Mukhopadhyay B."/>
            <person name="Bristow J."/>
            <person name="Kyrpides N."/>
        </authorList>
    </citation>
    <scope>NUCLEOTIDE SEQUENCE [LARGE SCALE GENOMIC DNA]</scope>
    <source>
        <strain>DSM 2475 / Hrk 5</strain>
    </source>
</reference>
<sequence>MSGQRKGYIAKVSGPVVIAKGISDIKMGEVVYVGNEGLLGEVVRVSQDSFAVQVYEDTSGLRPKEPVTATGKLLVAELGPGLMGRVFDGVQRPLKSIEELVGPFVKRGVKVNPLPRNVKWHFKPSVKVGDKVSSGDIIGVVQETPLIEHRVMVPIGVSGKVKEVVPEGDYTVEDPVVILESDGRVVELTMKQEWPVRQPRPYKERLPSEVPLLIGQRIIDTFFPIAKGGAGAIPGGFGTGKTVTLHKVSMYSDSQIVVYIGCGERGNEIAEMLKEFPVLVDPKSGRPIIERSIIIANTSNMPVSAREASIYMGVTIAEYYRDQGYDVTLIADSTSRWAEALREIAGRLGELPVERGYPAYLPDKIAEFYERGGRVKALGSPERSGSVTVLGAVSPPGGDYNEPVTIHTLRFVGTMWALDTDLAYRRHFPAINWLKSFSQYADIIERWWVKNVSPEFPKYRRRALRLLTVASEIEAIASVVGEGALPDDQRLILLTSEIIKEGFLRQTALSGEDVFCKPEKQYWLLKMMMDFFDKSYELIRKRVSIEEILRMPEIYEMMRVKEDERGLQAVKELYERVMAKLDEIAQRHGVTLAVEAEEVVA</sequence>
<accession>A1RX21</accession>